<accession>F4HW51</accession>
<accession>F4HW52</accession>
<accession>O04048</accession>
<accession>Q9FRS5</accession>
<dbReference type="EC" id="3.6.4.-"/>
<dbReference type="EMBL" id="AC003981">
    <property type="protein sequence ID" value="AAF99756.1"/>
    <property type="status" value="ALT_SEQ"/>
    <property type="molecule type" value="Genomic_DNA"/>
</dbReference>
<dbReference type="EMBL" id="CP002684">
    <property type="protein sequence ID" value="AEE28313.1"/>
    <property type="molecule type" value="Genomic_DNA"/>
</dbReference>
<dbReference type="EMBL" id="CP002684">
    <property type="protein sequence ID" value="AEE28314.1"/>
    <property type="molecule type" value="Genomic_DNA"/>
</dbReference>
<dbReference type="EMBL" id="CP002684">
    <property type="protein sequence ID" value="AEE28315.1"/>
    <property type="molecule type" value="Genomic_DNA"/>
</dbReference>
<dbReference type="EMBL" id="CP002684">
    <property type="protein sequence ID" value="AEE28316.1"/>
    <property type="molecule type" value="Genomic_DNA"/>
</dbReference>
<dbReference type="EMBL" id="U75593">
    <property type="protein sequence ID" value="AAB51700.1"/>
    <property type="status" value="ALT_FRAME"/>
    <property type="molecule type" value="mRNA"/>
</dbReference>
<dbReference type="PIR" id="F86218">
    <property type="entry name" value="F86218"/>
</dbReference>
<dbReference type="PIR" id="T00713">
    <property type="entry name" value="T00713"/>
</dbReference>
<dbReference type="RefSeq" id="NP_001184937.1">
    <molecule id="F4HW51-1"/>
    <property type="nucleotide sequence ID" value="NM_001198008.2"/>
</dbReference>
<dbReference type="RefSeq" id="NP_001184938.1">
    <molecule id="F4HW51-1"/>
    <property type="nucleotide sequence ID" value="NM_001198009.1"/>
</dbReference>
<dbReference type="RefSeq" id="NP_001184939.1">
    <molecule id="F4HW51-1"/>
    <property type="nucleotide sequence ID" value="NM_001198010.1"/>
</dbReference>
<dbReference type="RefSeq" id="NP_172336.4">
    <molecule id="F4HW51-2"/>
    <property type="nucleotide sequence ID" value="NM_100733.5"/>
</dbReference>
<dbReference type="SMR" id="F4HW51"/>
<dbReference type="BioGRID" id="22623">
    <property type="interactions" value="1"/>
</dbReference>
<dbReference type="FunCoup" id="F4HW51">
    <property type="interactions" value="2477"/>
</dbReference>
<dbReference type="STRING" id="3702.F4HW51"/>
<dbReference type="iPTMnet" id="F4HW51"/>
<dbReference type="PaxDb" id="3702-AT1G08600.4"/>
<dbReference type="ProteomicsDB" id="246785">
    <molecule id="F4HW51-1"/>
</dbReference>
<dbReference type="EnsemblPlants" id="AT1G08600.1">
    <molecule id="F4HW51-2"/>
    <property type="protein sequence ID" value="AT1G08600.1"/>
    <property type="gene ID" value="AT1G08600"/>
</dbReference>
<dbReference type="EnsemblPlants" id="AT1G08600.2">
    <molecule id="F4HW51-1"/>
    <property type="protein sequence ID" value="AT1G08600.2"/>
    <property type="gene ID" value="AT1G08600"/>
</dbReference>
<dbReference type="EnsemblPlants" id="AT1G08600.3">
    <molecule id="F4HW51-1"/>
    <property type="protein sequence ID" value="AT1G08600.3"/>
    <property type="gene ID" value="AT1G08600"/>
</dbReference>
<dbReference type="EnsemblPlants" id="AT1G08600.4">
    <molecule id="F4HW51-1"/>
    <property type="protein sequence ID" value="AT1G08600.4"/>
    <property type="gene ID" value="AT1G08600"/>
</dbReference>
<dbReference type="GeneID" id="837382"/>
<dbReference type="Gramene" id="AT1G08600.1">
    <molecule id="F4HW51-2"/>
    <property type="protein sequence ID" value="AT1G08600.1"/>
    <property type="gene ID" value="AT1G08600"/>
</dbReference>
<dbReference type="Gramene" id="AT1G08600.2">
    <molecule id="F4HW51-1"/>
    <property type="protein sequence ID" value="AT1G08600.2"/>
    <property type="gene ID" value="AT1G08600"/>
</dbReference>
<dbReference type="Gramene" id="AT1G08600.3">
    <molecule id="F4HW51-1"/>
    <property type="protein sequence ID" value="AT1G08600.3"/>
    <property type="gene ID" value="AT1G08600"/>
</dbReference>
<dbReference type="Gramene" id="AT1G08600.4">
    <molecule id="F4HW51-1"/>
    <property type="protein sequence ID" value="AT1G08600.4"/>
    <property type="gene ID" value="AT1G08600"/>
</dbReference>
<dbReference type="KEGG" id="ath:AT1G08600"/>
<dbReference type="Araport" id="AT1G08600"/>
<dbReference type="TAIR" id="AT1G08600">
    <property type="gene designation" value="ATRX"/>
</dbReference>
<dbReference type="eggNOG" id="KOG1015">
    <property type="taxonomic scope" value="Eukaryota"/>
</dbReference>
<dbReference type="HOGENOM" id="CLU_002089_0_0_1"/>
<dbReference type="InParanoid" id="F4HW51"/>
<dbReference type="OMA" id="QDISWET"/>
<dbReference type="OrthoDB" id="21111at2759"/>
<dbReference type="PRO" id="PR:F4HW51"/>
<dbReference type="Proteomes" id="UP000006548">
    <property type="component" value="Chromosome 1"/>
</dbReference>
<dbReference type="ExpressionAtlas" id="F4HW51">
    <property type="expression patterns" value="baseline and differential"/>
</dbReference>
<dbReference type="GO" id="GO:0000781">
    <property type="term" value="C:chromosome, telomeric region"/>
    <property type="evidence" value="ECO:0007669"/>
    <property type="project" value="UniProtKB-SubCell"/>
</dbReference>
<dbReference type="GO" id="GO:0005634">
    <property type="term" value="C:nucleus"/>
    <property type="evidence" value="ECO:0000314"/>
    <property type="project" value="TAIR"/>
</dbReference>
<dbReference type="GO" id="GO:0005524">
    <property type="term" value="F:ATP binding"/>
    <property type="evidence" value="ECO:0007669"/>
    <property type="project" value="UniProtKB-KW"/>
</dbReference>
<dbReference type="GO" id="GO:0016887">
    <property type="term" value="F:ATP hydrolysis activity"/>
    <property type="evidence" value="ECO:0007669"/>
    <property type="project" value="InterPro"/>
</dbReference>
<dbReference type="GO" id="GO:0003677">
    <property type="term" value="F:DNA binding"/>
    <property type="evidence" value="ECO:0007669"/>
    <property type="project" value="UniProtKB-KW"/>
</dbReference>
<dbReference type="GO" id="GO:0004386">
    <property type="term" value="F:helicase activity"/>
    <property type="evidence" value="ECO:0007669"/>
    <property type="project" value="UniProtKB-KW"/>
</dbReference>
<dbReference type="GO" id="GO:0008270">
    <property type="term" value="F:zinc ion binding"/>
    <property type="evidence" value="ECO:0007669"/>
    <property type="project" value="UniProtKB-KW"/>
</dbReference>
<dbReference type="GO" id="GO:0006325">
    <property type="term" value="P:chromatin organization"/>
    <property type="evidence" value="ECO:0007669"/>
    <property type="project" value="UniProtKB-KW"/>
</dbReference>
<dbReference type="GO" id="GO:0006281">
    <property type="term" value="P:DNA repair"/>
    <property type="evidence" value="ECO:0007669"/>
    <property type="project" value="UniProtKB-KW"/>
</dbReference>
<dbReference type="GO" id="GO:0043007">
    <property type="term" value="P:maintenance of rDNA"/>
    <property type="evidence" value="ECO:0000315"/>
    <property type="project" value="TAIR"/>
</dbReference>
<dbReference type="GO" id="GO:0009555">
    <property type="term" value="P:pollen development"/>
    <property type="evidence" value="ECO:0000315"/>
    <property type="project" value="TAIR"/>
</dbReference>
<dbReference type="CDD" id="cd11726">
    <property type="entry name" value="ADDz_ATRX"/>
    <property type="match status" value="1"/>
</dbReference>
<dbReference type="CDD" id="cd18069">
    <property type="entry name" value="DEXHc_ARIP4"/>
    <property type="match status" value="1"/>
</dbReference>
<dbReference type="CDD" id="cd18793">
    <property type="entry name" value="SF2_C_SNF"/>
    <property type="match status" value="1"/>
</dbReference>
<dbReference type="Gene3D" id="3.40.50.300">
    <property type="entry name" value="P-loop containing nucleotide triphosphate hydrolases"/>
    <property type="match status" value="1"/>
</dbReference>
<dbReference type="Gene3D" id="3.40.50.10810">
    <property type="entry name" value="Tandem AAA-ATPase domain"/>
    <property type="match status" value="1"/>
</dbReference>
<dbReference type="InterPro" id="IPR025766">
    <property type="entry name" value="ADD"/>
</dbReference>
<dbReference type="InterPro" id="IPR044574">
    <property type="entry name" value="ARIP4-like"/>
</dbReference>
<dbReference type="InterPro" id="IPR044573">
    <property type="entry name" value="ARIP4_DEXHc"/>
</dbReference>
<dbReference type="InterPro" id="IPR014001">
    <property type="entry name" value="Helicase_ATP-bd"/>
</dbReference>
<dbReference type="InterPro" id="IPR001650">
    <property type="entry name" value="Helicase_C-like"/>
</dbReference>
<dbReference type="InterPro" id="IPR027417">
    <property type="entry name" value="P-loop_NTPase"/>
</dbReference>
<dbReference type="InterPro" id="IPR038718">
    <property type="entry name" value="SNF2-like_sf"/>
</dbReference>
<dbReference type="InterPro" id="IPR049730">
    <property type="entry name" value="SNF2/RAD54-like_C"/>
</dbReference>
<dbReference type="InterPro" id="IPR000330">
    <property type="entry name" value="SNF2_N"/>
</dbReference>
<dbReference type="PANTHER" id="PTHR45797:SF1">
    <property type="entry name" value="HELICASE ARIP4"/>
    <property type="match status" value="1"/>
</dbReference>
<dbReference type="PANTHER" id="PTHR45797">
    <property type="entry name" value="RAD54-LIKE"/>
    <property type="match status" value="1"/>
</dbReference>
<dbReference type="Pfam" id="PF00271">
    <property type="entry name" value="Helicase_C"/>
    <property type="match status" value="1"/>
</dbReference>
<dbReference type="Pfam" id="PF00176">
    <property type="entry name" value="SNF2-rel_dom"/>
    <property type="match status" value="1"/>
</dbReference>
<dbReference type="SMART" id="SM00487">
    <property type="entry name" value="DEXDc"/>
    <property type="match status" value="1"/>
</dbReference>
<dbReference type="SMART" id="SM00490">
    <property type="entry name" value="HELICc"/>
    <property type="match status" value="1"/>
</dbReference>
<dbReference type="SUPFAM" id="SSF52540">
    <property type="entry name" value="P-loop containing nucleoside triphosphate hydrolases"/>
    <property type="match status" value="2"/>
</dbReference>
<dbReference type="PROSITE" id="PS51533">
    <property type="entry name" value="ADD"/>
    <property type="match status" value="1"/>
</dbReference>
<dbReference type="PROSITE" id="PS51192">
    <property type="entry name" value="HELICASE_ATP_BIND_1"/>
    <property type="match status" value="1"/>
</dbReference>
<dbReference type="PROSITE" id="PS51194">
    <property type="entry name" value="HELICASE_CTER"/>
    <property type="match status" value="1"/>
</dbReference>
<name>CHR20_ARATH</name>
<feature type="chain" id="PRO_0000430857" description="Protein CHROMATIN REMODELING 20">
    <location>
        <begin position="1"/>
        <end position="1479"/>
    </location>
</feature>
<feature type="domain" description="ADD" evidence="6">
    <location>
        <begin position="472"/>
        <end position="601"/>
    </location>
</feature>
<feature type="domain" description="Helicase ATP-binding" evidence="4">
    <location>
        <begin position="741"/>
        <end position="924"/>
    </location>
</feature>
<feature type="domain" description="Helicase C-terminal" evidence="5">
    <location>
        <begin position="1122"/>
        <end position="1290"/>
    </location>
</feature>
<feature type="zinc finger region" description="GATA-type; atypical" evidence="6">
    <location>
        <begin position="483"/>
        <end position="514"/>
    </location>
</feature>
<feature type="zinc finger region" description="PHD-type; atypical" evidence="6">
    <location>
        <begin position="524"/>
        <end position="577"/>
    </location>
</feature>
<feature type="region of interest" description="Disordered" evidence="7">
    <location>
        <begin position="40"/>
        <end position="109"/>
    </location>
</feature>
<feature type="region of interest" description="Disordered" evidence="7">
    <location>
        <begin position="594"/>
        <end position="615"/>
    </location>
</feature>
<feature type="region of interest" description="Disordered" evidence="7">
    <location>
        <begin position="1400"/>
        <end position="1423"/>
    </location>
</feature>
<feature type="coiled-coil region" evidence="3">
    <location>
        <begin position="19"/>
        <end position="49"/>
    </location>
</feature>
<feature type="coiled-coil region" evidence="3">
    <location>
        <begin position="109"/>
        <end position="199"/>
    </location>
</feature>
<feature type="coiled-coil region" evidence="3">
    <location>
        <begin position="578"/>
        <end position="598"/>
    </location>
</feature>
<feature type="short sequence motif" description="DEAH box" evidence="4">
    <location>
        <begin position="875"/>
        <end position="878"/>
    </location>
</feature>
<feature type="compositionally biased region" description="Basic and acidic residues" evidence="7">
    <location>
        <begin position="40"/>
        <end position="55"/>
    </location>
</feature>
<feature type="compositionally biased region" description="Low complexity" evidence="7">
    <location>
        <begin position="76"/>
        <end position="86"/>
    </location>
</feature>
<feature type="compositionally biased region" description="Basic and acidic residues" evidence="7">
    <location>
        <begin position="94"/>
        <end position="109"/>
    </location>
</feature>
<feature type="compositionally biased region" description="Low complexity" evidence="7">
    <location>
        <begin position="598"/>
        <end position="615"/>
    </location>
</feature>
<feature type="binding site" evidence="4">
    <location>
        <begin position="754"/>
        <end position="761"/>
    </location>
    <ligand>
        <name>ATP</name>
        <dbReference type="ChEBI" id="CHEBI:30616"/>
    </ligand>
</feature>
<feature type="splice variant" id="VSP_057103" description="In isoform 2.">
    <original>ERRFDLLTKWRKKGGVFLMGYTNFRNLSLGR</original>
    <variation>YKFFYERNFW</variation>
    <location>
        <begin position="820"/>
        <end position="850"/>
    </location>
</feature>
<evidence type="ECO:0000250" key="1">
    <source>
        <dbReference type="UniProtKB" id="P46100"/>
    </source>
</evidence>
<evidence type="ECO:0000250" key="2">
    <source>
        <dbReference type="UniProtKB" id="Q61687"/>
    </source>
</evidence>
<evidence type="ECO:0000255" key="3"/>
<evidence type="ECO:0000255" key="4">
    <source>
        <dbReference type="PROSITE-ProRule" id="PRU00541"/>
    </source>
</evidence>
<evidence type="ECO:0000255" key="5">
    <source>
        <dbReference type="PROSITE-ProRule" id="PRU00542"/>
    </source>
</evidence>
<evidence type="ECO:0000255" key="6">
    <source>
        <dbReference type="PROSITE-ProRule" id="PRU00865"/>
    </source>
</evidence>
<evidence type="ECO:0000256" key="7">
    <source>
        <dbReference type="SAM" id="MobiDB-lite"/>
    </source>
</evidence>
<evidence type="ECO:0000269" key="8">
    <source>
    </source>
</evidence>
<evidence type="ECO:0000303" key="9">
    <source>
    </source>
</evidence>
<evidence type="ECO:0000305" key="10"/>
<evidence type="ECO:0000312" key="11">
    <source>
        <dbReference type="Araport" id="AT1G08600"/>
    </source>
</evidence>
<evidence type="ECO:0000312" key="12">
    <source>
        <dbReference type="EMBL" id="AAF99756.1"/>
    </source>
</evidence>
<evidence type="ECO:0000312" key="13">
    <source>
        <dbReference type="EMBL" id="AEE28313.1"/>
    </source>
</evidence>
<reference key="1">
    <citation type="journal article" date="2000" name="Nature">
        <title>Sequence and analysis of chromosome 1 of the plant Arabidopsis thaliana.</title>
        <authorList>
            <person name="Theologis A."/>
            <person name="Ecker J.R."/>
            <person name="Palm C.J."/>
            <person name="Federspiel N.A."/>
            <person name="Kaul S."/>
            <person name="White O."/>
            <person name="Alonso J."/>
            <person name="Altafi H."/>
            <person name="Araujo R."/>
            <person name="Bowman C.L."/>
            <person name="Brooks S.Y."/>
            <person name="Buehler E."/>
            <person name="Chan A."/>
            <person name="Chao Q."/>
            <person name="Chen H."/>
            <person name="Cheuk R.F."/>
            <person name="Chin C.W."/>
            <person name="Chung M.K."/>
            <person name="Conn L."/>
            <person name="Conway A.B."/>
            <person name="Conway A.R."/>
            <person name="Creasy T.H."/>
            <person name="Dewar K."/>
            <person name="Dunn P."/>
            <person name="Etgu P."/>
            <person name="Feldblyum T.V."/>
            <person name="Feng J.-D."/>
            <person name="Fong B."/>
            <person name="Fujii C.Y."/>
            <person name="Gill J.E."/>
            <person name="Goldsmith A.D."/>
            <person name="Haas B."/>
            <person name="Hansen N.F."/>
            <person name="Hughes B."/>
            <person name="Huizar L."/>
            <person name="Hunter J.L."/>
            <person name="Jenkins J."/>
            <person name="Johnson-Hopson C."/>
            <person name="Khan S."/>
            <person name="Khaykin E."/>
            <person name="Kim C.J."/>
            <person name="Koo H.L."/>
            <person name="Kremenetskaia I."/>
            <person name="Kurtz D.B."/>
            <person name="Kwan A."/>
            <person name="Lam B."/>
            <person name="Langin-Hooper S."/>
            <person name="Lee A."/>
            <person name="Lee J.M."/>
            <person name="Lenz C.A."/>
            <person name="Li J.H."/>
            <person name="Li Y.-P."/>
            <person name="Lin X."/>
            <person name="Liu S.X."/>
            <person name="Liu Z.A."/>
            <person name="Luros J.S."/>
            <person name="Maiti R."/>
            <person name="Marziali A."/>
            <person name="Militscher J."/>
            <person name="Miranda M."/>
            <person name="Nguyen M."/>
            <person name="Nierman W.C."/>
            <person name="Osborne B.I."/>
            <person name="Pai G."/>
            <person name="Peterson J."/>
            <person name="Pham P.K."/>
            <person name="Rizzo M."/>
            <person name="Rooney T."/>
            <person name="Rowley D."/>
            <person name="Sakano H."/>
            <person name="Salzberg S.L."/>
            <person name="Schwartz J.R."/>
            <person name="Shinn P."/>
            <person name="Southwick A.M."/>
            <person name="Sun H."/>
            <person name="Tallon L.J."/>
            <person name="Tambunga G."/>
            <person name="Toriumi M.J."/>
            <person name="Town C.D."/>
            <person name="Utterback T."/>
            <person name="Van Aken S."/>
            <person name="Vaysberg M."/>
            <person name="Vysotskaia V.S."/>
            <person name="Walker M."/>
            <person name="Wu D."/>
            <person name="Yu G."/>
            <person name="Fraser C.M."/>
            <person name="Venter J.C."/>
            <person name="Davis R.W."/>
        </authorList>
    </citation>
    <scope>NUCLEOTIDE SEQUENCE [LARGE SCALE GENOMIC DNA]</scope>
    <source>
        <strain>cv. Columbia</strain>
    </source>
</reference>
<reference key="2">
    <citation type="journal article" date="2017" name="Plant J.">
        <title>Araport11: a complete reannotation of the Arabidopsis thaliana reference genome.</title>
        <authorList>
            <person name="Cheng C.Y."/>
            <person name="Krishnakumar V."/>
            <person name="Chan A.P."/>
            <person name="Thibaud-Nissen F."/>
            <person name="Schobel S."/>
            <person name="Town C.D."/>
        </authorList>
    </citation>
    <scope>GENOME REANNOTATION</scope>
    <source>
        <strain>cv. Columbia</strain>
    </source>
</reference>
<reference key="3">
    <citation type="submission" date="1996-10" db="EMBL/GenBank/DDBJ databases">
        <title>EST of salt inducible mRNA in Arabidopsis thaliana.</title>
        <authorList>
            <person name="Pih K.T."/>
            <person name="Park J.M."/>
            <person name="Jang H.J."/>
            <person name="Kang S.G."/>
            <person name="Piao H.L."/>
            <person name="Hwang I.H."/>
        </authorList>
    </citation>
    <scope>NUCLEOTIDE SEQUENCE [MRNA] OF 1246-1362</scope>
    <source>
        <strain>cv. Columbia</strain>
    </source>
</reference>
<reference key="4">
    <citation type="journal article" date="2006" name="Genetics">
        <title>Involvement of the Arabidopsis SWI2/SNF2 chromatin remodeling gene family in DNA damage response and recombination.</title>
        <authorList>
            <person name="Shaked H."/>
            <person name="Avivi-Ragolsky N."/>
            <person name="Levy A.A."/>
        </authorList>
    </citation>
    <scope>FUNCTION</scope>
    <scope>DISRUPTION PHENOTYPE</scope>
    <scope>GENE FAMILY</scope>
    <scope>NOMENCLATURE</scope>
</reference>
<reference key="5">
    <citation type="journal article" date="2013" name="PLoS ONE">
        <title>Genome-wide comparative in silico analysis of the RNA helicase gene family in Zea mays and Glycine max: a comparison with Arabidopsis and Oryza sativa.</title>
        <authorList>
            <person name="Xu R."/>
            <person name="Zhang S."/>
            <person name="Huang J."/>
            <person name="Zheng C."/>
        </authorList>
    </citation>
    <scope>GENE FAMILY</scope>
</reference>
<proteinExistence type="evidence at transcript level"/>
<gene>
    <name evidence="13" type="primary">ATRX</name>
    <name evidence="9" type="synonym">CHR20</name>
    <name evidence="11" type="ordered locus">At1g08600</name>
    <name evidence="12" type="ORF">F22O13.8</name>
</gene>
<sequence length="1479" mass="168176">MEANEESLKGKIEKLEGKEVIVESKEDEMDIIIEENREAEQEVMEVKARDGRGEQNDVLMEENNNQGEQKDEEMQDASSRSESSDFNSDEDEQILSRRDDELDLEKPLSEEEIDELISDLLAVESKAAEAQEALEKESLSKVESEVREELAQALRGDELDEAVAAEMMTFKDEWEATLDELETESATLLEQLDGAGIELPKLYEMIESQAPNGCYTEAWKQRAHWVGTQVTKETVESLANAERFLHTHRPVRKRHGKLLEEGASGFLEKKLADGAVKESLAGTSELDWSSLNKVFSEKRDESVSFGSKQWASVYLASTPHQAAAMGLEFPGVNEVEEIEEIDASLADPFLADAIDNERELALTEEQKTNYIRVKEEDDITCDRVLQLRLKRKRRKKRSKQVIRCAAENMDDDSVYLDGNNTTPNFAKDQVKSPETSTQVHNSEVNIEENGNFSNSDVDKMTPSTHINVDAKRDDSQNPANNFRCTACNKVAVEVHSHPLLEVIVCMDCKRSIEDRVSKVDDSLERHCEWCGHIADLIDCRTCEKLFCASCIKRNIGEEYMSEAQSSGWDCCCCSPIPLQRLTLELEKAMRDKKSIELSSDSSSDSSSDNNSVDTDADVNVTISSKKKSKKKIRRIIDDAELGKDTRTKIAIEKARQERLRSLQFSARYKTISSMGDVKSIPEGAEVEVLGDAHSGYIVNVVREIGEEAVRVPRSISAKLKVHQVTGIRFMWENIIQSISRVKSGDKGLGCILAHTMGLGKTFQVIAFLYTAMRCVDLGLKTALIVTPVNVLHNWRSEFEKWMPSEVKPLRIFMLGDVSRERRFDLLTKWRKKGGVFLMGYTNFRNLSLGRGVKDLNAARGICNALRDGPDILVCDEAHIIKNTKADTTQALKQVKCQRRIALTGSPLQNNLMEYYCMVDFVREGFLGSSPEFRNRFQNPIENGQHMNSTAEDVKIMNQRSHILYEQLKGFVQRMDMNVVKKDLPPKTVFVISVKLSPLQRILYQRFLELYGFSDGRTDERMRKNFFAAYQVLAQILNHPGIPQLRSEDSKNGRRGSIVDIPDDCSSDENIDYNMVTGEKQRTMNDLQDKVDGYLQKDWWVDLLQKNNYKVSDFSGKMILLLDILSMSADVGDKALVFSQSIPTLDLIELYLSRVPRHGKQGKFWKKGKDWYRIDGKTESSERQKLVDRFNEPDNKRVKCTLISTRAGSLGINLYAANRVIIVDGSWNPTYDLQAIFRAWRYGQKKPVFAYRLMARGTIEEKIYKRQVTKEGLAARVVDRQQVHRTISKEEMLHLFEFDDDDEKSEAVTEISKQNEAGHSNLVEQAILWTKKATLSRVGGDKLMENLLQRHGPNWISSFHEHETLLQENEEERLTKEEKDMAWEVYRRALEWEEVQRVPFSESPVVPKPSPSTQTEPLPQPKGFNRSRFVNRNCTRIAHQLTLISQGLKVGSSTVCGECGRVIRWEDVIPASKLSAVIVN</sequence>
<comment type="function">
    <text evidence="2 8">Involved in transcriptional regulation and chromatin remodeling. Facilitates DNA replication in multiple cellular environments and is required for efficient replication of a subset of genomic loci. Binds to DNA tandem repeat sequences in both telomeres and euchromatin and in vitro binds DNA quadruplex structures. May help stabilizing G-rich regions into regular chromatin structures by remodeling G4 DNA and incorporating H3.3-containing nucleosomes (By similarity). Involved in DNA repair of gamma-irradiation-mediated damages (PubMed:16547115).</text>
</comment>
<comment type="subcellular location">
    <subcellularLocation>
        <location evidence="2">Nucleus</location>
    </subcellularLocation>
    <subcellularLocation>
        <location evidence="2">Chromosome</location>
        <location evidence="2">Telomere</location>
    </subcellularLocation>
</comment>
<comment type="alternative products">
    <event type="alternative splicing"/>
    <isoform>
        <id>F4HW51-1</id>
        <name>1</name>
        <sequence type="displayed"/>
    </isoform>
    <isoform>
        <id>F4HW51-2</id>
        <name>2</name>
        <sequence type="described" ref="VSP_057103"/>
    </isoform>
</comment>
<comment type="domain">
    <text evidence="1">The ADD domain predominantly interacts with histone H3 trimethylated at 'Lys-10'(H3K9me3) (and to a lesser extent H3 mono- or dimethylated at 'Lys-10') and simultaneously to histone H3 unmethylated at 'Lys-5' (H3K4me0). The interaction with H3K9me3 is disrupted by the presence of H3K4me3 suggesting a readout of the combined histone H3 methylation state.</text>
</comment>
<comment type="disruption phenotype">
    <text evidence="8">Slight sensitivity to gamma-irradiation.</text>
</comment>
<comment type="similarity">
    <text evidence="10">Belongs to the SNF2/RAD54 helicase family.</text>
</comment>
<comment type="sequence caution" evidence="10">
    <conflict type="frameshift">
        <sequence resource="EMBL-CDS" id="AAB51700"/>
    </conflict>
</comment>
<comment type="sequence caution">
    <conflict type="erroneous gene model prediction">
        <sequence resource="EMBL-CDS" id="AAF99756"/>
    </conflict>
</comment>
<organism evidence="13">
    <name type="scientific">Arabidopsis thaliana</name>
    <name type="common">Mouse-ear cress</name>
    <dbReference type="NCBI Taxonomy" id="3702"/>
    <lineage>
        <taxon>Eukaryota</taxon>
        <taxon>Viridiplantae</taxon>
        <taxon>Streptophyta</taxon>
        <taxon>Embryophyta</taxon>
        <taxon>Tracheophyta</taxon>
        <taxon>Spermatophyta</taxon>
        <taxon>Magnoliopsida</taxon>
        <taxon>eudicotyledons</taxon>
        <taxon>Gunneridae</taxon>
        <taxon>Pentapetalae</taxon>
        <taxon>rosids</taxon>
        <taxon>malvids</taxon>
        <taxon>Brassicales</taxon>
        <taxon>Brassicaceae</taxon>
        <taxon>Camelineae</taxon>
        <taxon>Arabidopsis</taxon>
    </lineage>
</organism>
<protein>
    <recommendedName>
        <fullName evidence="9">Protein CHROMATIN REMODELING 20</fullName>
        <shortName>AtCHR20</shortName>
        <ecNumber>3.6.4.-</ecNumber>
    </recommendedName>
    <alternativeName>
        <fullName evidence="2">ATP-dependent helicase ATRX</fullName>
    </alternativeName>
    <alternativeName>
        <fullName evidence="2">Transcriptional regulator ATRX</fullName>
    </alternativeName>
    <alternativeName>
        <fullName evidence="2">X-linked helicase II</fullName>
    </alternativeName>
</protein>
<keyword id="KW-0025">Alternative splicing</keyword>
<keyword id="KW-0067">ATP-binding</keyword>
<keyword id="KW-0156">Chromatin regulator</keyword>
<keyword id="KW-0158">Chromosome</keyword>
<keyword id="KW-0175">Coiled coil</keyword>
<keyword id="KW-0227">DNA damage</keyword>
<keyword id="KW-0234">DNA repair</keyword>
<keyword id="KW-0238">DNA-binding</keyword>
<keyword id="KW-0347">Helicase</keyword>
<keyword id="KW-0378">Hydrolase</keyword>
<keyword id="KW-0479">Metal-binding</keyword>
<keyword id="KW-0547">Nucleotide-binding</keyword>
<keyword id="KW-0539">Nucleus</keyword>
<keyword id="KW-1185">Reference proteome</keyword>
<keyword id="KW-0779">Telomere</keyword>
<keyword id="KW-0804">Transcription</keyword>
<keyword id="KW-0805">Transcription regulation</keyword>
<keyword id="KW-0862">Zinc</keyword>
<keyword id="KW-0863">Zinc-finger</keyword>